<dbReference type="EC" id="3.1.3.5" evidence="1"/>
<dbReference type="EMBL" id="CR767821">
    <property type="protein sequence ID" value="CAH58022.1"/>
    <property type="molecule type" value="Genomic_DNA"/>
</dbReference>
<dbReference type="EMBL" id="CR925678">
    <property type="protein sequence ID" value="CAI26804.1"/>
    <property type="status" value="ALT_INIT"/>
    <property type="molecule type" value="Genomic_DNA"/>
</dbReference>
<dbReference type="RefSeq" id="WP_011154986.1">
    <property type="nucleotide sequence ID" value="NC_005295.2"/>
</dbReference>
<dbReference type="SMR" id="Q5HBM5"/>
<dbReference type="GeneID" id="33057902"/>
<dbReference type="KEGG" id="eru:Erum3050"/>
<dbReference type="KEGG" id="erw:ERWE_CDS_03100"/>
<dbReference type="eggNOG" id="COG0496">
    <property type="taxonomic scope" value="Bacteria"/>
</dbReference>
<dbReference type="HOGENOM" id="CLU_045192_1_2_5"/>
<dbReference type="Proteomes" id="UP000001021">
    <property type="component" value="Chromosome"/>
</dbReference>
<dbReference type="GO" id="GO:0005737">
    <property type="term" value="C:cytoplasm"/>
    <property type="evidence" value="ECO:0007669"/>
    <property type="project" value="UniProtKB-SubCell"/>
</dbReference>
<dbReference type="GO" id="GO:0008254">
    <property type="term" value="F:3'-nucleotidase activity"/>
    <property type="evidence" value="ECO:0007669"/>
    <property type="project" value="TreeGrafter"/>
</dbReference>
<dbReference type="GO" id="GO:0008253">
    <property type="term" value="F:5'-nucleotidase activity"/>
    <property type="evidence" value="ECO:0007669"/>
    <property type="project" value="UniProtKB-UniRule"/>
</dbReference>
<dbReference type="GO" id="GO:0004309">
    <property type="term" value="F:exopolyphosphatase activity"/>
    <property type="evidence" value="ECO:0007669"/>
    <property type="project" value="TreeGrafter"/>
</dbReference>
<dbReference type="GO" id="GO:0046872">
    <property type="term" value="F:metal ion binding"/>
    <property type="evidence" value="ECO:0007669"/>
    <property type="project" value="UniProtKB-UniRule"/>
</dbReference>
<dbReference type="GO" id="GO:0000166">
    <property type="term" value="F:nucleotide binding"/>
    <property type="evidence" value="ECO:0007669"/>
    <property type="project" value="UniProtKB-KW"/>
</dbReference>
<dbReference type="Gene3D" id="3.40.1210.10">
    <property type="entry name" value="Survival protein SurE-like phosphatase/nucleotidase"/>
    <property type="match status" value="1"/>
</dbReference>
<dbReference type="HAMAP" id="MF_00060">
    <property type="entry name" value="SurE"/>
    <property type="match status" value="1"/>
</dbReference>
<dbReference type="InterPro" id="IPR030048">
    <property type="entry name" value="SurE"/>
</dbReference>
<dbReference type="InterPro" id="IPR002828">
    <property type="entry name" value="SurE-like_Pase/nucleotidase"/>
</dbReference>
<dbReference type="InterPro" id="IPR036523">
    <property type="entry name" value="SurE-like_sf"/>
</dbReference>
<dbReference type="NCBIfam" id="TIGR00087">
    <property type="entry name" value="surE"/>
    <property type="match status" value="1"/>
</dbReference>
<dbReference type="PANTHER" id="PTHR30457">
    <property type="entry name" value="5'-NUCLEOTIDASE SURE"/>
    <property type="match status" value="1"/>
</dbReference>
<dbReference type="PANTHER" id="PTHR30457:SF12">
    <property type="entry name" value="5'_3'-NUCLEOTIDASE SURE"/>
    <property type="match status" value="1"/>
</dbReference>
<dbReference type="Pfam" id="PF01975">
    <property type="entry name" value="SurE"/>
    <property type="match status" value="1"/>
</dbReference>
<dbReference type="SUPFAM" id="SSF64167">
    <property type="entry name" value="SurE-like"/>
    <property type="match status" value="1"/>
</dbReference>
<proteinExistence type="inferred from homology"/>
<reference key="1">
    <citation type="journal article" date="2005" name="Proc. Natl. Acad. Sci. U.S.A.">
        <title>The genome of the heartwater agent Ehrlichia ruminantium contains multiple tandem repeats of actively variable copy number.</title>
        <authorList>
            <person name="Collins N.E."/>
            <person name="Liebenberg J."/>
            <person name="de Villiers E.P."/>
            <person name="Brayton K.A."/>
            <person name="Louw E."/>
            <person name="Pretorius A."/>
            <person name="Faber F.E."/>
            <person name="van Heerden H."/>
            <person name="Josemans A."/>
            <person name="van Kleef M."/>
            <person name="Steyn H.C."/>
            <person name="van Strijp M.F."/>
            <person name="Zweygarth E."/>
            <person name="Jongejan F."/>
            <person name="Maillard J.C."/>
            <person name="Berthier D."/>
            <person name="Botha M."/>
            <person name="Joubert F."/>
            <person name="Corton C.H."/>
            <person name="Thomson N.R."/>
            <person name="Allsopp M.T."/>
            <person name="Allsopp B.A."/>
        </authorList>
    </citation>
    <scope>NUCLEOTIDE SEQUENCE [LARGE SCALE GENOMIC DNA]</scope>
    <source>
        <strain>Welgevonden</strain>
    </source>
</reference>
<reference key="2">
    <citation type="journal article" date="2006" name="J. Bacteriol.">
        <title>Comparative genomic analysis of three strains of Ehrlichia ruminantium reveals an active process of genome size plasticity.</title>
        <authorList>
            <person name="Frutos R."/>
            <person name="Viari A."/>
            <person name="Ferraz C."/>
            <person name="Morgat A."/>
            <person name="Eychenie S."/>
            <person name="Kandassamy Y."/>
            <person name="Chantal I."/>
            <person name="Bensaid A."/>
            <person name="Coissac E."/>
            <person name="Vachiery N."/>
            <person name="Demaille J."/>
            <person name="Martinez D."/>
        </authorList>
    </citation>
    <scope>NUCLEOTIDE SEQUENCE [LARGE SCALE GENOMIC DNA]</scope>
    <source>
        <strain>Welgevonden</strain>
    </source>
</reference>
<gene>
    <name evidence="1" type="primary">surE</name>
    <name type="ordered locus">Erum3050</name>
    <name type="ordered locus">ERWE_CDS_03100</name>
</gene>
<protein>
    <recommendedName>
        <fullName evidence="1">5'-nucleotidase SurE</fullName>
        <ecNumber evidence="1">3.1.3.5</ecNumber>
    </recommendedName>
    <alternativeName>
        <fullName evidence="1">Nucleoside 5'-monophosphate phosphohydrolase</fullName>
    </alternativeName>
</protein>
<sequence length="252" mass="27644">MRVLLSNDDGFHANGIKALKEIVIKSGIASEIWVVAPLNNCSGSGRSVGLNVKVQVSKVSDTEFIVDSTPSTSVFLALRKIMNYKPDLILSGINHGVNIGNDVWYSGTVAAAAEGAAINIPSIAISQEYDNKSGEINWVNPQRFLKQIIEMLMNVSFWNKSTVMNVNFPLMPAKGIKFTDQGKYVPCNEIEKNESSDDSNVSYTITRITPNKKNRAQCDGSIKAIDEGYITITPLKFDMTDFDVLTSLNSLK</sequence>
<accession>Q5HBM5</accession>
<accession>Q5FEB8</accession>
<name>SURE_EHRRW</name>
<comment type="function">
    <text evidence="1">Nucleotidase that shows phosphatase activity on nucleoside 5'-monophosphates.</text>
</comment>
<comment type="catalytic activity">
    <reaction evidence="1">
        <text>a ribonucleoside 5'-phosphate + H2O = a ribonucleoside + phosphate</text>
        <dbReference type="Rhea" id="RHEA:12484"/>
        <dbReference type="ChEBI" id="CHEBI:15377"/>
        <dbReference type="ChEBI" id="CHEBI:18254"/>
        <dbReference type="ChEBI" id="CHEBI:43474"/>
        <dbReference type="ChEBI" id="CHEBI:58043"/>
        <dbReference type="EC" id="3.1.3.5"/>
    </reaction>
</comment>
<comment type="cofactor">
    <cofactor evidence="1">
        <name>a divalent metal cation</name>
        <dbReference type="ChEBI" id="CHEBI:60240"/>
    </cofactor>
    <text evidence="1">Binds 1 divalent metal cation per subunit.</text>
</comment>
<comment type="subcellular location">
    <subcellularLocation>
        <location evidence="1">Cytoplasm</location>
    </subcellularLocation>
</comment>
<comment type="similarity">
    <text evidence="1">Belongs to the SurE nucleotidase family.</text>
</comment>
<comment type="sequence caution" evidence="2">
    <conflict type="erroneous initiation">
        <sequence resource="EMBL-CDS" id="CAI26804"/>
    </conflict>
</comment>
<keyword id="KW-0963">Cytoplasm</keyword>
<keyword id="KW-0378">Hydrolase</keyword>
<keyword id="KW-0479">Metal-binding</keyword>
<keyword id="KW-0547">Nucleotide-binding</keyword>
<feature type="chain" id="PRO_0000235615" description="5'-nucleotidase SurE">
    <location>
        <begin position="1"/>
        <end position="252"/>
    </location>
</feature>
<feature type="binding site" evidence="1">
    <location>
        <position position="8"/>
    </location>
    <ligand>
        <name>a divalent metal cation</name>
        <dbReference type="ChEBI" id="CHEBI:60240"/>
    </ligand>
</feature>
<feature type="binding site" evidence="1">
    <location>
        <position position="9"/>
    </location>
    <ligand>
        <name>a divalent metal cation</name>
        <dbReference type="ChEBI" id="CHEBI:60240"/>
    </ligand>
</feature>
<feature type="binding site" evidence="1">
    <location>
        <position position="42"/>
    </location>
    <ligand>
        <name>a divalent metal cation</name>
        <dbReference type="ChEBI" id="CHEBI:60240"/>
    </ligand>
</feature>
<feature type="binding site" evidence="1">
    <location>
        <position position="94"/>
    </location>
    <ligand>
        <name>a divalent metal cation</name>
        <dbReference type="ChEBI" id="CHEBI:60240"/>
    </ligand>
</feature>
<evidence type="ECO:0000255" key="1">
    <source>
        <dbReference type="HAMAP-Rule" id="MF_00060"/>
    </source>
</evidence>
<evidence type="ECO:0000305" key="2"/>
<organism>
    <name type="scientific">Ehrlichia ruminantium (strain Welgevonden)</name>
    <dbReference type="NCBI Taxonomy" id="254945"/>
    <lineage>
        <taxon>Bacteria</taxon>
        <taxon>Pseudomonadati</taxon>
        <taxon>Pseudomonadota</taxon>
        <taxon>Alphaproteobacteria</taxon>
        <taxon>Rickettsiales</taxon>
        <taxon>Anaplasmataceae</taxon>
        <taxon>Ehrlichia</taxon>
    </lineage>
</organism>